<accession>C1CTN0</accession>
<keyword id="KW-1003">Cell membrane</keyword>
<keyword id="KW-0143">Chaperone</keyword>
<keyword id="KW-0449">Lipoprotein</keyword>
<keyword id="KW-0472">Membrane</keyword>
<keyword id="KW-0564">Palmitate</keyword>
<keyword id="KW-0653">Protein transport</keyword>
<keyword id="KW-0732">Signal</keyword>
<keyword id="KW-0812">Transmembrane</keyword>
<keyword id="KW-1133">Transmembrane helix</keyword>
<keyword id="KW-0813">Transport</keyword>
<reference key="1">
    <citation type="journal article" date="2010" name="Genome Biol.">
        <title>Structure and dynamics of the pan-genome of Streptococcus pneumoniae and closely related species.</title>
        <authorList>
            <person name="Donati C."/>
            <person name="Hiller N.L."/>
            <person name="Tettelin H."/>
            <person name="Muzzi A."/>
            <person name="Croucher N.J."/>
            <person name="Angiuoli S.V."/>
            <person name="Oggioni M."/>
            <person name="Dunning Hotopp J.C."/>
            <person name="Hu F.Z."/>
            <person name="Riley D.R."/>
            <person name="Covacci A."/>
            <person name="Mitchell T.J."/>
            <person name="Bentley S.D."/>
            <person name="Kilian M."/>
            <person name="Ehrlich G.D."/>
            <person name="Rappuoli R."/>
            <person name="Moxon E.R."/>
            <person name="Masignani V."/>
        </authorList>
    </citation>
    <scope>NUCLEOTIDE SEQUENCE [LARGE SCALE GENOMIC DNA]</scope>
    <source>
        <strain>Taiwan19F-14</strain>
    </source>
</reference>
<sequence length="308" mass="34105">MKSIKRFALSAMGVAMLLVLTGCVNVDKTTGQPTGFIWNTIGAPMAEAIKYFATDKGLGFGVAIIIVTIIVRLIILPLGIYQSWKATLHSEKMNALKHVLEPHQTRLKEATTQEEKLEAQQALFAAQKEHGISMFGGVGCFPILLQMPFFSAIYFAAQHTEGVAQASYLGIPLGSPSMILVACAGVLYYLQSLLSLHGVEDEMQREQIKKMIYMSPLMIVVFSLFSPASVTLYWVVGGFMMILQQFIVNYIVRPKLRKKVREELAKNPPKASAFSKPSGRKDVTPEQPTAITSKKKHKNRNAGKQRSR</sequence>
<protein>
    <recommendedName>
        <fullName evidence="1">Membrane protein insertase YidC</fullName>
    </recommendedName>
    <alternativeName>
        <fullName evidence="1">Foldase YidC</fullName>
    </alternativeName>
    <alternativeName>
        <fullName evidence="1">Membrane integrase YidC</fullName>
    </alternativeName>
    <alternativeName>
        <fullName evidence="1">Membrane protein YidC</fullName>
    </alternativeName>
</protein>
<dbReference type="EMBL" id="CP000921">
    <property type="protein sequence ID" value="ACO23138.1"/>
    <property type="molecule type" value="Genomic_DNA"/>
</dbReference>
<dbReference type="RefSeq" id="WP_000835955.1">
    <property type="nucleotide sequence ID" value="NC_012469.1"/>
</dbReference>
<dbReference type="SMR" id="C1CTN0"/>
<dbReference type="KEGG" id="snt:SPT_1955"/>
<dbReference type="HOGENOM" id="CLU_036138_5_1_9"/>
<dbReference type="GO" id="GO:0005886">
    <property type="term" value="C:plasma membrane"/>
    <property type="evidence" value="ECO:0007669"/>
    <property type="project" value="UniProtKB-SubCell"/>
</dbReference>
<dbReference type="GO" id="GO:0032977">
    <property type="term" value="F:membrane insertase activity"/>
    <property type="evidence" value="ECO:0007669"/>
    <property type="project" value="InterPro"/>
</dbReference>
<dbReference type="GO" id="GO:0051205">
    <property type="term" value="P:protein insertion into membrane"/>
    <property type="evidence" value="ECO:0007669"/>
    <property type="project" value="TreeGrafter"/>
</dbReference>
<dbReference type="GO" id="GO:0015031">
    <property type="term" value="P:protein transport"/>
    <property type="evidence" value="ECO:0007669"/>
    <property type="project" value="UniProtKB-KW"/>
</dbReference>
<dbReference type="CDD" id="cd20070">
    <property type="entry name" value="5TM_YidC_Alb3"/>
    <property type="match status" value="1"/>
</dbReference>
<dbReference type="HAMAP" id="MF_01811">
    <property type="entry name" value="YidC_type2"/>
    <property type="match status" value="1"/>
</dbReference>
<dbReference type="InterPro" id="IPR001708">
    <property type="entry name" value="YidC/ALB3/OXA1/COX18"/>
</dbReference>
<dbReference type="InterPro" id="IPR028055">
    <property type="entry name" value="YidC/Oxa/ALB_C"/>
</dbReference>
<dbReference type="InterPro" id="IPR023060">
    <property type="entry name" value="YidC/YidC1/YidC2_Firmicutes"/>
</dbReference>
<dbReference type="InterPro" id="IPR047196">
    <property type="entry name" value="YidC_ALB_C"/>
</dbReference>
<dbReference type="NCBIfam" id="NF002687">
    <property type="entry name" value="PRK02463.1"/>
    <property type="match status" value="1"/>
</dbReference>
<dbReference type="NCBIfam" id="TIGR03592">
    <property type="entry name" value="yidC_oxa1_cterm"/>
    <property type="match status" value="1"/>
</dbReference>
<dbReference type="PANTHER" id="PTHR12428:SF65">
    <property type="entry name" value="CYTOCHROME C OXIDASE ASSEMBLY PROTEIN COX18, MITOCHONDRIAL"/>
    <property type="match status" value="1"/>
</dbReference>
<dbReference type="PANTHER" id="PTHR12428">
    <property type="entry name" value="OXA1"/>
    <property type="match status" value="1"/>
</dbReference>
<dbReference type="Pfam" id="PF02096">
    <property type="entry name" value="60KD_IMP"/>
    <property type="match status" value="1"/>
</dbReference>
<dbReference type="PROSITE" id="PS51257">
    <property type="entry name" value="PROKAR_LIPOPROTEIN"/>
    <property type="match status" value="1"/>
</dbReference>
<proteinExistence type="inferred from homology"/>
<comment type="function">
    <text evidence="1">Required for the insertion and/or proper folding and/or complex formation of integral membrane proteins into the membrane. Involved in integration of membrane proteins that insert both dependently and independently of the Sec translocase complex, as well as at least some lipoproteins.</text>
</comment>
<comment type="subcellular location">
    <subcellularLocation>
        <location evidence="1">Cell membrane</location>
        <topology evidence="1">Multi-pass membrane protein</topology>
    </subcellularLocation>
</comment>
<comment type="similarity">
    <text evidence="1">Belongs to the OXA1/ALB3/YidC family. Type 2 subfamily.</text>
</comment>
<gene>
    <name evidence="1" type="primary">yidC</name>
    <name type="ordered locus">SPT_1955</name>
</gene>
<organism>
    <name type="scientific">Streptococcus pneumoniae (strain Taiwan19F-14)</name>
    <dbReference type="NCBI Taxonomy" id="487213"/>
    <lineage>
        <taxon>Bacteria</taxon>
        <taxon>Bacillati</taxon>
        <taxon>Bacillota</taxon>
        <taxon>Bacilli</taxon>
        <taxon>Lactobacillales</taxon>
        <taxon>Streptococcaceae</taxon>
        <taxon>Streptococcus</taxon>
    </lineage>
</organism>
<feature type="signal peptide" evidence="1">
    <location>
        <begin position="1"/>
        <end position="22"/>
    </location>
</feature>
<feature type="chain" id="PRO_1000187719" description="Membrane protein insertase YidC">
    <location>
        <begin position="23"/>
        <end position="308"/>
    </location>
</feature>
<feature type="transmembrane region" description="Helical" evidence="1">
    <location>
        <begin position="60"/>
        <end position="80"/>
    </location>
</feature>
<feature type="transmembrane region" description="Helical" evidence="1">
    <location>
        <begin position="135"/>
        <end position="155"/>
    </location>
</feature>
<feature type="transmembrane region" description="Helical" evidence="1">
    <location>
        <begin position="168"/>
        <end position="188"/>
    </location>
</feature>
<feature type="transmembrane region" description="Helical" evidence="1">
    <location>
        <begin position="211"/>
        <end position="225"/>
    </location>
</feature>
<feature type="transmembrane region" description="Helical" evidence="1">
    <location>
        <begin position="230"/>
        <end position="252"/>
    </location>
</feature>
<feature type="region of interest" description="Disordered" evidence="2">
    <location>
        <begin position="263"/>
        <end position="308"/>
    </location>
</feature>
<feature type="compositionally biased region" description="Basic residues" evidence="2">
    <location>
        <begin position="293"/>
        <end position="308"/>
    </location>
</feature>
<feature type="lipid moiety-binding region" description="N-palmitoyl cysteine" evidence="1">
    <location>
        <position position="23"/>
    </location>
</feature>
<feature type="lipid moiety-binding region" description="S-diacylglycerol cysteine" evidence="1">
    <location>
        <position position="23"/>
    </location>
</feature>
<name>YIDC_STRZT</name>
<evidence type="ECO:0000255" key="1">
    <source>
        <dbReference type="HAMAP-Rule" id="MF_01811"/>
    </source>
</evidence>
<evidence type="ECO:0000256" key="2">
    <source>
        <dbReference type="SAM" id="MobiDB-lite"/>
    </source>
</evidence>